<gene>
    <name type="ordered locus">YLR202C</name>
</gene>
<protein>
    <recommendedName>
        <fullName>Putative uncharacterized protein YLR202C</fullName>
    </recommendedName>
</protein>
<sequence>MPNFHLINICVFYRYYNFFLICHDISFPFRTILGGRKIAITIVRNNNTGFFFFWAYIRYFTPIWKEITESLPHYKSCFVAILPERAVNSFVYIIRTLSNMLNQFILNL</sequence>
<organism>
    <name type="scientific">Saccharomyces cerevisiae (strain ATCC 204508 / S288c)</name>
    <name type="common">Baker's yeast</name>
    <dbReference type="NCBI Taxonomy" id="559292"/>
    <lineage>
        <taxon>Eukaryota</taxon>
        <taxon>Fungi</taxon>
        <taxon>Dikarya</taxon>
        <taxon>Ascomycota</taxon>
        <taxon>Saccharomycotina</taxon>
        <taxon>Saccharomycetes</taxon>
        <taxon>Saccharomycetales</taxon>
        <taxon>Saccharomycetaceae</taxon>
        <taxon>Saccharomyces</taxon>
    </lineage>
</organism>
<feature type="chain" id="PRO_0000299622" description="Putative uncharacterized protein YLR202C">
    <location>
        <begin position="1"/>
        <end position="108"/>
    </location>
</feature>
<comment type="miscellaneous">
    <text evidence="1">Partially overlaps COQ9.</text>
</comment>
<comment type="caution">
    <text evidence="2">Product of a dubious gene prediction unlikely to encode a functional protein. Because of that it is not part of the S.cerevisiae S288c complete/reference proteome set.</text>
</comment>
<reference key="1">
    <citation type="journal article" date="1997" name="Nature">
        <title>The nucleotide sequence of Saccharomyces cerevisiae chromosome XII.</title>
        <authorList>
            <person name="Johnston M."/>
            <person name="Hillier L.W."/>
            <person name="Riles L."/>
            <person name="Albermann K."/>
            <person name="Andre B."/>
            <person name="Ansorge W."/>
            <person name="Benes V."/>
            <person name="Brueckner M."/>
            <person name="Delius H."/>
            <person name="Dubois E."/>
            <person name="Duesterhoeft A."/>
            <person name="Entian K.-D."/>
            <person name="Floeth M."/>
            <person name="Goffeau A."/>
            <person name="Hebling U."/>
            <person name="Heumann K."/>
            <person name="Heuss-Neitzel D."/>
            <person name="Hilbert H."/>
            <person name="Hilger F."/>
            <person name="Kleine K."/>
            <person name="Koetter P."/>
            <person name="Louis E.J."/>
            <person name="Messenguy F."/>
            <person name="Mewes H.-W."/>
            <person name="Miosga T."/>
            <person name="Moestl D."/>
            <person name="Mueller-Auer S."/>
            <person name="Nentwich U."/>
            <person name="Obermaier B."/>
            <person name="Piravandi E."/>
            <person name="Pohl T.M."/>
            <person name="Portetelle D."/>
            <person name="Purnelle B."/>
            <person name="Rechmann S."/>
            <person name="Rieger M."/>
            <person name="Rinke M."/>
            <person name="Rose M."/>
            <person name="Scharfe M."/>
            <person name="Scherens B."/>
            <person name="Scholler P."/>
            <person name="Schwager C."/>
            <person name="Schwarz S."/>
            <person name="Underwood A.P."/>
            <person name="Urrestarazu L.A."/>
            <person name="Vandenbol M."/>
            <person name="Verhasselt P."/>
            <person name="Vierendeels F."/>
            <person name="Voet M."/>
            <person name="Volckaert G."/>
            <person name="Voss H."/>
            <person name="Wambutt R."/>
            <person name="Wedler E."/>
            <person name="Wedler H."/>
            <person name="Zimmermann F.K."/>
            <person name="Zollner A."/>
            <person name="Hani J."/>
            <person name="Hoheisel J.D."/>
        </authorList>
    </citation>
    <scope>NUCLEOTIDE SEQUENCE [LARGE SCALE GENOMIC DNA]</scope>
    <source>
        <strain>ATCC 204508 / S288c</strain>
    </source>
</reference>
<reference key="2">
    <citation type="journal article" date="2014" name="G3 (Bethesda)">
        <title>The reference genome sequence of Saccharomyces cerevisiae: Then and now.</title>
        <authorList>
            <person name="Engel S.R."/>
            <person name="Dietrich F.S."/>
            <person name="Fisk D.G."/>
            <person name="Binkley G."/>
            <person name="Balakrishnan R."/>
            <person name="Costanzo M.C."/>
            <person name="Dwight S.S."/>
            <person name="Hitz B.C."/>
            <person name="Karra K."/>
            <person name="Nash R.S."/>
            <person name="Weng S."/>
            <person name="Wong E.D."/>
            <person name="Lloyd P."/>
            <person name="Skrzypek M.S."/>
            <person name="Miyasato S.R."/>
            <person name="Simison M."/>
            <person name="Cherry J.M."/>
        </authorList>
    </citation>
    <scope>GENOME REANNOTATION</scope>
    <source>
        <strain>ATCC 204508 / S288c</strain>
    </source>
</reference>
<dbReference type="EMBL" id="U14913">
    <property type="protein sequence ID" value="AAB67450.1"/>
    <property type="molecule type" value="Genomic_DNA"/>
</dbReference>
<dbReference type="PIR" id="S69294">
    <property type="entry name" value="S69294"/>
</dbReference>
<dbReference type="DIP" id="DIP-4744N"/>
<dbReference type="IntAct" id="O13531">
    <property type="interactions" value="3"/>
</dbReference>
<dbReference type="PaxDb" id="4932-YLR202C"/>
<dbReference type="EnsemblFungi" id="YLR202C_mRNA">
    <property type="protein sequence ID" value="YLR202C"/>
    <property type="gene ID" value="YLR202C"/>
</dbReference>
<dbReference type="AGR" id="SGD:S000004192"/>
<dbReference type="SGD" id="S000004192">
    <property type="gene designation" value="YLR202C"/>
</dbReference>
<dbReference type="HOGENOM" id="CLU_2199064_0_0_1"/>
<name>YL202_YEAST</name>
<accession>O13531</accession>
<evidence type="ECO:0000305" key="1"/>
<evidence type="ECO:0000305" key="2">
    <source>
    </source>
</evidence>
<proteinExistence type="uncertain"/>